<dbReference type="EC" id="6.1.1.19" evidence="1"/>
<dbReference type="EMBL" id="CP001016">
    <property type="protein sequence ID" value="ACB96282.1"/>
    <property type="molecule type" value="Genomic_DNA"/>
</dbReference>
<dbReference type="RefSeq" id="WP_012385633.1">
    <property type="nucleotide sequence ID" value="NC_010581.1"/>
</dbReference>
<dbReference type="SMR" id="B2IJG9"/>
<dbReference type="STRING" id="395963.Bind_2710"/>
<dbReference type="KEGG" id="bid:Bind_2710"/>
<dbReference type="eggNOG" id="COG0018">
    <property type="taxonomic scope" value="Bacteria"/>
</dbReference>
<dbReference type="HOGENOM" id="CLU_006406_0_1_5"/>
<dbReference type="OrthoDB" id="9803211at2"/>
<dbReference type="Proteomes" id="UP000001695">
    <property type="component" value="Chromosome"/>
</dbReference>
<dbReference type="GO" id="GO:0005737">
    <property type="term" value="C:cytoplasm"/>
    <property type="evidence" value="ECO:0007669"/>
    <property type="project" value="UniProtKB-SubCell"/>
</dbReference>
<dbReference type="GO" id="GO:0004814">
    <property type="term" value="F:arginine-tRNA ligase activity"/>
    <property type="evidence" value="ECO:0007669"/>
    <property type="project" value="UniProtKB-UniRule"/>
</dbReference>
<dbReference type="GO" id="GO:0005524">
    <property type="term" value="F:ATP binding"/>
    <property type="evidence" value="ECO:0007669"/>
    <property type="project" value="UniProtKB-UniRule"/>
</dbReference>
<dbReference type="GO" id="GO:0006420">
    <property type="term" value="P:arginyl-tRNA aminoacylation"/>
    <property type="evidence" value="ECO:0007669"/>
    <property type="project" value="UniProtKB-UniRule"/>
</dbReference>
<dbReference type="CDD" id="cd00671">
    <property type="entry name" value="ArgRS_core"/>
    <property type="match status" value="1"/>
</dbReference>
<dbReference type="FunFam" id="1.10.730.10:FF:000008">
    <property type="entry name" value="Arginine--tRNA ligase"/>
    <property type="match status" value="1"/>
</dbReference>
<dbReference type="FunFam" id="3.40.50.620:FF:000062">
    <property type="entry name" value="Arginine--tRNA ligase"/>
    <property type="match status" value="1"/>
</dbReference>
<dbReference type="Gene3D" id="3.30.1360.70">
    <property type="entry name" value="Arginyl tRNA synthetase N-terminal domain"/>
    <property type="match status" value="1"/>
</dbReference>
<dbReference type="Gene3D" id="3.40.50.620">
    <property type="entry name" value="HUPs"/>
    <property type="match status" value="1"/>
</dbReference>
<dbReference type="Gene3D" id="1.10.730.10">
    <property type="entry name" value="Isoleucyl-tRNA Synthetase, Domain 1"/>
    <property type="match status" value="1"/>
</dbReference>
<dbReference type="HAMAP" id="MF_00123">
    <property type="entry name" value="Arg_tRNA_synth"/>
    <property type="match status" value="1"/>
</dbReference>
<dbReference type="InterPro" id="IPR001412">
    <property type="entry name" value="aa-tRNA-synth_I_CS"/>
</dbReference>
<dbReference type="InterPro" id="IPR001278">
    <property type="entry name" value="Arg-tRNA-ligase"/>
</dbReference>
<dbReference type="InterPro" id="IPR005148">
    <property type="entry name" value="Arg-tRNA-synth_N"/>
</dbReference>
<dbReference type="InterPro" id="IPR036695">
    <property type="entry name" value="Arg-tRNA-synth_N_sf"/>
</dbReference>
<dbReference type="InterPro" id="IPR035684">
    <property type="entry name" value="ArgRS_core"/>
</dbReference>
<dbReference type="InterPro" id="IPR008909">
    <property type="entry name" value="DALR_anticod-bd"/>
</dbReference>
<dbReference type="InterPro" id="IPR014729">
    <property type="entry name" value="Rossmann-like_a/b/a_fold"/>
</dbReference>
<dbReference type="InterPro" id="IPR009080">
    <property type="entry name" value="tRNAsynth_Ia_anticodon-bd"/>
</dbReference>
<dbReference type="NCBIfam" id="TIGR00456">
    <property type="entry name" value="argS"/>
    <property type="match status" value="1"/>
</dbReference>
<dbReference type="PANTHER" id="PTHR11956:SF5">
    <property type="entry name" value="ARGININE--TRNA LIGASE, CYTOPLASMIC"/>
    <property type="match status" value="1"/>
</dbReference>
<dbReference type="PANTHER" id="PTHR11956">
    <property type="entry name" value="ARGINYL-TRNA SYNTHETASE"/>
    <property type="match status" value="1"/>
</dbReference>
<dbReference type="Pfam" id="PF03485">
    <property type="entry name" value="Arg_tRNA_synt_N"/>
    <property type="match status" value="1"/>
</dbReference>
<dbReference type="Pfam" id="PF05746">
    <property type="entry name" value="DALR_1"/>
    <property type="match status" value="1"/>
</dbReference>
<dbReference type="Pfam" id="PF00750">
    <property type="entry name" value="tRNA-synt_1d"/>
    <property type="match status" value="2"/>
</dbReference>
<dbReference type="PRINTS" id="PR01038">
    <property type="entry name" value="TRNASYNTHARG"/>
</dbReference>
<dbReference type="SMART" id="SM01016">
    <property type="entry name" value="Arg_tRNA_synt_N"/>
    <property type="match status" value="1"/>
</dbReference>
<dbReference type="SMART" id="SM00836">
    <property type="entry name" value="DALR_1"/>
    <property type="match status" value="1"/>
</dbReference>
<dbReference type="SUPFAM" id="SSF47323">
    <property type="entry name" value="Anticodon-binding domain of a subclass of class I aminoacyl-tRNA synthetases"/>
    <property type="match status" value="1"/>
</dbReference>
<dbReference type="SUPFAM" id="SSF55190">
    <property type="entry name" value="Arginyl-tRNA synthetase (ArgRS), N-terminal 'additional' domain"/>
    <property type="match status" value="1"/>
</dbReference>
<dbReference type="SUPFAM" id="SSF52374">
    <property type="entry name" value="Nucleotidylyl transferase"/>
    <property type="match status" value="1"/>
</dbReference>
<dbReference type="PROSITE" id="PS00178">
    <property type="entry name" value="AA_TRNA_LIGASE_I"/>
    <property type="match status" value="1"/>
</dbReference>
<sequence length="590" mass="64693">MNIFTEFHARIAAILRGIIGSGRLPEDLDLTRFVVEPPREAAHGDLAANAAMVYAKEAKPAFANPRQLAVEIAVALAEDGDVAEAEVAGPGFINIRLKPEFFGRLLGAALEQGSDFGRPATAAQEKINVEYVSANPTGPMHVGHGRGAVFGDALANLLAFAGFGVTREYYINDAGAQVDVLARSAHLRYREALGETIGAIPEGLYPGDYLKSVGASLAQAHGDTYRGSNGEEWLEIFRLAAIDGMMAMIRDDLAALNITHEVFFSERSLTRSEDGDQVAAAIAFLRDRGLVYEGRLPPPKGQAIEDWEDREQVLFKSTDFGDDVDRPLKKSDGTYTYFASDIAYHKTKIDRGYSVLIDVWGADHGGYVKRMAAAVKALSEGRVTLDVKLCQLVKLMRGGEPVKMSKRAGDFVTLREVVDEVGVDAVRFMMLFRKNDAVLEFDLAKVIEQSKDNPVFYVQYAHARVKSVFRQAATLLPDLDCSLAALKTADFSLLGDEGEARLIKIIAQFPRVVEGAALAHEPHRIAFYLHDLASELHAHWTRGKDQPHLRFIYEERRDLTLARLALVHIMAEVLASGLSLLGVSAPSEMR</sequence>
<comment type="catalytic activity">
    <reaction evidence="1">
        <text>tRNA(Arg) + L-arginine + ATP = L-arginyl-tRNA(Arg) + AMP + diphosphate</text>
        <dbReference type="Rhea" id="RHEA:20301"/>
        <dbReference type="Rhea" id="RHEA-COMP:9658"/>
        <dbReference type="Rhea" id="RHEA-COMP:9673"/>
        <dbReference type="ChEBI" id="CHEBI:30616"/>
        <dbReference type="ChEBI" id="CHEBI:32682"/>
        <dbReference type="ChEBI" id="CHEBI:33019"/>
        <dbReference type="ChEBI" id="CHEBI:78442"/>
        <dbReference type="ChEBI" id="CHEBI:78513"/>
        <dbReference type="ChEBI" id="CHEBI:456215"/>
        <dbReference type="EC" id="6.1.1.19"/>
    </reaction>
</comment>
<comment type="subunit">
    <text evidence="1">Monomer.</text>
</comment>
<comment type="subcellular location">
    <subcellularLocation>
        <location evidence="1">Cytoplasm</location>
    </subcellularLocation>
</comment>
<comment type="similarity">
    <text evidence="1">Belongs to the class-I aminoacyl-tRNA synthetase family.</text>
</comment>
<reference key="1">
    <citation type="journal article" date="2010" name="J. Bacteriol.">
        <title>Complete genome sequence of Beijerinckia indica subsp. indica.</title>
        <authorList>
            <person name="Tamas I."/>
            <person name="Dedysh S.N."/>
            <person name="Liesack W."/>
            <person name="Stott M.B."/>
            <person name="Alam M."/>
            <person name="Murrell J.C."/>
            <person name="Dunfield P.F."/>
        </authorList>
    </citation>
    <scope>NUCLEOTIDE SEQUENCE [LARGE SCALE GENOMIC DNA]</scope>
    <source>
        <strain>ATCC 9039 / DSM 1715 / NCIMB 8712</strain>
    </source>
</reference>
<organism>
    <name type="scientific">Beijerinckia indica subsp. indica (strain ATCC 9039 / DSM 1715 / NCIMB 8712)</name>
    <dbReference type="NCBI Taxonomy" id="395963"/>
    <lineage>
        <taxon>Bacteria</taxon>
        <taxon>Pseudomonadati</taxon>
        <taxon>Pseudomonadota</taxon>
        <taxon>Alphaproteobacteria</taxon>
        <taxon>Hyphomicrobiales</taxon>
        <taxon>Beijerinckiaceae</taxon>
        <taxon>Beijerinckia</taxon>
    </lineage>
</organism>
<accession>B2IJG9</accession>
<proteinExistence type="inferred from homology"/>
<gene>
    <name evidence="1" type="primary">argS</name>
    <name type="ordered locus">Bind_2710</name>
</gene>
<name>SYR_BEII9</name>
<evidence type="ECO:0000255" key="1">
    <source>
        <dbReference type="HAMAP-Rule" id="MF_00123"/>
    </source>
</evidence>
<protein>
    <recommendedName>
        <fullName evidence="1">Arginine--tRNA ligase</fullName>
        <ecNumber evidence="1">6.1.1.19</ecNumber>
    </recommendedName>
    <alternativeName>
        <fullName evidence="1">Arginyl-tRNA synthetase</fullName>
        <shortName evidence="1">ArgRS</shortName>
    </alternativeName>
</protein>
<feature type="chain" id="PRO_1000198873" description="Arginine--tRNA ligase">
    <location>
        <begin position="1"/>
        <end position="590"/>
    </location>
</feature>
<feature type="short sequence motif" description="'HIGH' region">
    <location>
        <begin position="134"/>
        <end position="144"/>
    </location>
</feature>
<keyword id="KW-0030">Aminoacyl-tRNA synthetase</keyword>
<keyword id="KW-0067">ATP-binding</keyword>
<keyword id="KW-0963">Cytoplasm</keyword>
<keyword id="KW-0436">Ligase</keyword>
<keyword id="KW-0547">Nucleotide-binding</keyword>
<keyword id="KW-0648">Protein biosynthesis</keyword>
<keyword id="KW-1185">Reference proteome</keyword>